<evidence type="ECO:0000250" key="1"/>
<evidence type="ECO:0000255" key="2">
    <source>
        <dbReference type="PROSITE-ProRule" id="PRU00686"/>
    </source>
</evidence>
<evidence type="ECO:0000305" key="3"/>
<reference key="1">
    <citation type="journal article" date="2002" name="Nucleic Acids Res.">
        <title>Genome sequence of Shigella flexneri 2a: insights into pathogenicity through comparison with genomes of Escherichia coli K12 and O157.</title>
        <authorList>
            <person name="Jin Q."/>
            <person name="Yuan Z."/>
            <person name="Xu J."/>
            <person name="Wang Y."/>
            <person name="Shen Y."/>
            <person name="Lu W."/>
            <person name="Wang J."/>
            <person name="Liu H."/>
            <person name="Yang J."/>
            <person name="Yang F."/>
            <person name="Zhang X."/>
            <person name="Zhang J."/>
            <person name="Yang G."/>
            <person name="Wu H."/>
            <person name="Qu D."/>
            <person name="Dong J."/>
            <person name="Sun L."/>
            <person name="Xue Y."/>
            <person name="Zhao A."/>
            <person name="Gao Y."/>
            <person name="Zhu J."/>
            <person name="Kan B."/>
            <person name="Ding K."/>
            <person name="Chen S."/>
            <person name="Cheng H."/>
            <person name="Yao Z."/>
            <person name="He B."/>
            <person name="Chen R."/>
            <person name="Ma D."/>
            <person name="Qiang B."/>
            <person name="Wen Y."/>
            <person name="Hou Y."/>
            <person name="Yu J."/>
        </authorList>
    </citation>
    <scope>NUCLEOTIDE SEQUENCE [LARGE SCALE GENOMIC DNA]</scope>
    <source>
        <strain>301 / Serotype 2a</strain>
    </source>
</reference>
<reference key="2">
    <citation type="journal article" date="2003" name="Infect. Immun.">
        <title>Complete genome sequence and comparative genomics of Shigella flexneri serotype 2a strain 2457T.</title>
        <authorList>
            <person name="Wei J."/>
            <person name="Goldberg M.B."/>
            <person name="Burland V."/>
            <person name="Venkatesan M.M."/>
            <person name="Deng W."/>
            <person name="Fournier G."/>
            <person name="Mayhew G.F."/>
            <person name="Plunkett G. III"/>
            <person name="Rose D.J."/>
            <person name="Darling A."/>
            <person name="Mau B."/>
            <person name="Perna N.T."/>
            <person name="Payne S.M."/>
            <person name="Runyen-Janecky L.J."/>
            <person name="Zhou S."/>
            <person name="Schwartz D.C."/>
            <person name="Blattner F.R."/>
        </authorList>
    </citation>
    <scope>NUCLEOTIDE SEQUENCE [LARGE SCALE GENOMIC DNA]</scope>
    <source>
        <strain>ATCC 700930 / 2457T / Serotype 2a</strain>
    </source>
</reference>
<sequence length="115" mass="12879">MSTTIEKIQRQIAENPILLYMKGSPKLPSCGFSAQAVQALAACGERFAYVDILQNPDIRAELPKYANWPTFPQLWVDGELVGGCDIVIEMYQRGELQQLIKETAAKYKSEEPDAE</sequence>
<comment type="function">
    <text evidence="1">Monothiol glutaredoxin involved in the biogenesis of iron-sulfur clusters.</text>
</comment>
<comment type="subunit">
    <text evidence="1">Homodimer.</text>
</comment>
<comment type="subcellular location">
    <subcellularLocation>
        <location evidence="1">Cytoplasm</location>
    </subcellularLocation>
</comment>
<comment type="similarity">
    <text evidence="3">Belongs to the glutaredoxin family. Monothiol subfamily.</text>
</comment>
<organism>
    <name type="scientific">Shigella flexneri</name>
    <dbReference type="NCBI Taxonomy" id="623"/>
    <lineage>
        <taxon>Bacteria</taxon>
        <taxon>Pseudomonadati</taxon>
        <taxon>Pseudomonadota</taxon>
        <taxon>Gammaproteobacteria</taxon>
        <taxon>Enterobacterales</taxon>
        <taxon>Enterobacteriaceae</taxon>
        <taxon>Shigella</taxon>
    </lineage>
</organism>
<gene>
    <name type="primary">grxD</name>
    <name type="synonym">ydhD</name>
    <name type="ordered locus">SF1682</name>
    <name type="ordered locus">S1814</name>
</gene>
<protein>
    <recommendedName>
        <fullName>Glutaredoxin 4</fullName>
        <shortName>Grx4</shortName>
    </recommendedName>
    <alternativeName>
        <fullName>Monothiol glutaredoxin</fullName>
    </alternativeName>
</protein>
<name>GLRX4_SHIFL</name>
<feature type="chain" id="PRO_0000102260" description="Glutaredoxin 4">
    <location>
        <begin position="1"/>
        <end position="115"/>
    </location>
</feature>
<feature type="domain" description="Glutaredoxin" evidence="2">
    <location>
        <begin position="5"/>
        <end position="107"/>
    </location>
</feature>
<feature type="binding site" evidence="1">
    <location>
        <position position="22"/>
    </location>
    <ligand>
        <name>glutathione</name>
        <dbReference type="ChEBI" id="CHEBI:57925"/>
    </ligand>
</feature>
<feature type="binding site" evidence="1">
    <location>
        <position position="30"/>
    </location>
    <ligand>
        <name>[2Fe-2S] cluster</name>
        <dbReference type="ChEBI" id="CHEBI:190135"/>
        <note>ligand shared between dimeric partners</note>
    </ligand>
</feature>
<feature type="binding site" evidence="1">
    <location>
        <position position="59"/>
    </location>
    <ligand>
        <name>glutathione</name>
        <dbReference type="ChEBI" id="CHEBI:57925"/>
    </ligand>
</feature>
<feature type="binding site" evidence="1">
    <location>
        <position position="71"/>
    </location>
    <ligand>
        <name>glutathione</name>
        <dbReference type="ChEBI" id="CHEBI:57925"/>
    </ligand>
</feature>
<feature type="binding site" evidence="1">
    <location>
        <begin position="84"/>
        <end position="85"/>
    </location>
    <ligand>
        <name>glutathione</name>
        <dbReference type="ChEBI" id="CHEBI:57925"/>
    </ligand>
</feature>
<dbReference type="EMBL" id="AE005674">
    <property type="protein sequence ID" value="AAN43261.1"/>
    <property type="molecule type" value="Genomic_DNA"/>
</dbReference>
<dbReference type="EMBL" id="AE014073">
    <property type="protein sequence ID" value="AAP17150.1"/>
    <property type="molecule type" value="Genomic_DNA"/>
</dbReference>
<dbReference type="RefSeq" id="NP_707554.1">
    <property type="nucleotide sequence ID" value="NC_004337.2"/>
</dbReference>
<dbReference type="RefSeq" id="WP_000108172.1">
    <property type="nucleotide sequence ID" value="NZ_WPGW01000025.1"/>
</dbReference>
<dbReference type="SMR" id="P0AC72"/>
<dbReference type="STRING" id="198214.SF1682"/>
<dbReference type="PaxDb" id="198214-SF1682"/>
<dbReference type="GeneID" id="1024840"/>
<dbReference type="GeneID" id="89516419"/>
<dbReference type="KEGG" id="sfl:SF1682"/>
<dbReference type="KEGG" id="sfx:S1814"/>
<dbReference type="PATRIC" id="fig|198214.7.peg.1987"/>
<dbReference type="HOGENOM" id="CLU_026126_2_1_6"/>
<dbReference type="Proteomes" id="UP000001006">
    <property type="component" value="Chromosome"/>
</dbReference>
<dbReference type="Proteomes" id="UP000002673">
    <property type="component" value="Chromosome"/>
</dbReference>
<dbReference type="GO" id="GO:0005737">
    <property type="term" value="C:cytoplasm"/>
    <property type="evidence" value="ECO:0007669"/>
    <property type="project" value="UniProtKB-SubCell"/>
</dbReference>
<dbReference type="GO" id="GO:0051537">
    <property type="term" value="F:2 iron, 2 sulfur cluster binding"/>
    <property type="evidence" value="ECO:0007669"/>
    <property type="project" value="UniProtKB-KW"/>
</dbReference>
<dbReference type="GO" id="GO:0015036">
    <property type="term" value="F:disulfide oxidoreductase activity"/>
    <property type="evidence" value="ECO:0007669"/>
    <property type="project" value="InterPro"/>
</dbReference>
<dbReference type="GO" id="GO:0046872">
    <property type="term" value="F:metal ion binding"/>
    <property type="evidence" value="ECO:0007669"/>
    <property type="project" value="UniProtKB-KW"/>
</dbReference>
<dbReference type="CDD" id="cd03028">
    <property type="entry name" value="GRX_PICOT_like"/>
    <property type="match status" value="1"/>
</dbReference>
<dbReference type="FunFam" id="3.40.30.10:FF:000006">
    <property type="entry name" value="Glutaredoxin"/>
    <property type="match status" value="1"/>
</dbReference>
<dbReference type="Gene3D" id="3.40.30.10">
    <property type="entry name" value="Glutaredoxin"/>
    <property type="match status" value="1"/>
</dbReference>
<dbReference type="InterPro" id="IPR002109">
    <property type="entry name" value="Glutaredoxin"/>
</dbReference>
<dbReference type="InterPro" id="IPR033658">
    <property type="entry name" value="GRX_PICOT-like"/>
</dbReference>
<dbReference type="InterPro" id="IPR014434">
    <property type="entry name" value="Monothiol_GRX"/>
</dbReference>
<dbReference type="InterPro" id="IPR004480">
    <property type="entry name" value="Monothiol_GRX-rel"/>
</dbReference>
<dbReference type="InterPro" id="IPR036249">
    <property type="entry name" value="Thioredoxin-like_sf"/>
</dbReference>
<dbReference type="NCBIfam" id="TIGR00365">
    <property type="entry name" value="Grx4 family monothiol glutaredoxin"/>
    <property type="match status" value="1"/>
</dbReference>
<dbReference type="NCBIfam" id="NF008086">
    <property type="entry name" value="PRK10824.1"/>
    <property type="match status" value="1"/>
</dbReference>
<dbReference type="PANTHER" id="PTHR10293">
    <property type="entry name" value="GLUTAREDOXIN FAMILY MEMBER"/>
    <property type="match status" value="1"/>
</dbReference>
<dbReference type="PANTHER" id="PTHR10293:SF72">
    <property type="entry name" value="MONOTHIOL GLUTAREDOXIN-S14, CHLOROPLASTIC"/>
    <property type="match status" value="1"/>
</dbReference>
<dbReference type="Pfam" id="PF00462">
    <property type="entry name" value="Glutaredoxin"/>
    <property type="match status" value="1"/>
</dbReference>
<dbReference type="PIRSF" id="PIRSF005894">
    <property type="entry name" value="Monothiol_GRX"/>
    <property type="match status" value="1"/>
</dbReference>
<dbReference type="SUPFAM" id="SSF52833">
    <property type="entry name" value="Thioredoxin-like"/>
    <property type="match status" value="1"/>
</dbReference>
<dbReference type="PROSITE" id="PS51354">
    <property type="entry name" value="GLUTAREDOXIN_2"/>
    <property type="match status" value="1"/>
</dbReference>
<accession>P0AC72</accession>
<accession>P37010</accession>
<accession>P77424</accession>
<keyword id="KW-0001">2Fe-2S</keyword>
<keyword id="KW-0963">Cytoplasm</keyword>
<keyword id="KW-0408">Iron</keyword>
<keyword id="KW-0411">Iron-sulfur</keyword>
<keyword id="KW-0479">Metal-binding</keyword>
<keyword id="KW-0676">Redox-active center</keyword>
<keyword id="KW-1185">Reference proteome</keyword>
<proteinExistence type="inferred from homology"/>